<gene>
    <name type="primary">VP30</name>
</gene>
<organismHost>
    <name type="scientific">Epomops franqueti</name>
    <name type="common">Franquet's epauletted fruit bat</name>
    <name type="synonym">Epomophorus franqueti</name>
    <dbReference type="NCBI Taxonomy" id="77231"/>
</organismHost>
<organismHost>
    <name type="scientific">Homo sapiens</name>
    <name type="common">Human</name>
    <dbReference type="NCBI Taxonomy" id="9606"/>
</organismHost>
<organismHost>
    <name type="scientific">Myonycteris torquata</name>
    <name type="common">Little collared fruit bat</name>
    <dbReference type="NCBI Taxonomy" id="77243"/>
</organismHost>
<accession>Q5XX03</accession>
<keyword id="KW-0010">Activator</keyword>
<keyword id="KW-1035">Host cytoplasm</keyword>
<keyword id="KW-0945">Host-virus interaction</keyword>
<keyword id="KW-1090">Inhibition of host innate immune response by virus</keyword>
<keyword id="KW-0479">Metal-binding</keyword>
<keyword id="KW-0597">Phosphoprotein</keyword>
<keyword id="KW-0694">RNA-binding</keyword>
<keyword id="KW-0941">Suppressor of RNA silencing</keyword>
<keyword id="KW-0804">Transcription</keyword>
<keyword id="KW-0899">Viral immunoevasion</keyword>
<keyword id="KW-0543">Viral nucleoprotein</keyword>
<keyword id="KW-0946">Virion</keyword>
<keyword id="KW-0862">Zinc</keyword>
<keyword id="KW-0863">Zinc-finger</keyword>
<proteinExistence type="inferred from homology"/>
<sequence>MERGRERGRSRNSRADQQNSTGPQFRTRSISRDKTTTDYRSSRSTSQVRVPTVFHKKGTGTLTVPPAPKDVCPTLRKGFLCDSNFCKKDHQLESLTDRELLLLIARKTCGSTDSSLNIAAPKDLRLANPTADDFKQDGSPKLTLKLLVETAEFWANQNINEVDDAKLRALLTLSAVLVRKFSKSQLSQLCESHLRRENLGQDQAESVLEVYQRLHSDKGGAFEAALWQQWDRQSLTMFISAFLHVALQLSCESSTVVISGLRLLAPPSVNEGLPPAPGEYTWSEDSTT</sequence>
<protein>
    <recommendedName>
        <fullName evidence="2">Transcriptional activator VP30</fullName>
    </recommendedName>
    <alternativeName>
        <fullName evidence="2">EbolaVP30</fullName>
        <shortName evidence="2">eVP30</shortName>
    </alternativeName>
    <alternativeName>
        <fullName>Minor nucleoprotein VP30</fullName>
    </alternativeName>
</protein>
<reference key="1">
    <citation type="journal article" date="2005" name="Virus Res.">
        <title>Complete genome sequence of an Ebola virus (Sudan species) responsible for a 2000 outbreak of human disease in Uganda.</title>
        <authorList>
            <person name="Sanchez A."/>
            <person name="Rollin P.E."/>
        </authorList>
    </citation>
    <scope>NUCLEOTIDE SEQUENCE [GENOMIC RNA]</scope>
</reference>
<feature type="chain" id="PRO_0000245073" description="Transcriptional activator VP30">
    <location>
        <begin position="1"/>
        <end position="288"/>
    </location>
</feature>
<feature type="zinc finger region" description="C3H1-type; atypical">
    <location>
        <begin position="72"/>
        <end position="90"/>
    </location>
</feature>
<feature type="region of interest" description="Disordered" evidence="4">
    <location>
        <begin position="1"/>
        <end position="49"/>
    </location>
</feature>
<feature type="region of interest" description="RNA-binding" evidence="2">
    <location>
        <begin position="26"/>
        <end position="40"/>
    </location>
</feature>
<feature type="region of interest" description="Oligomerization" evidence="1">
    <location>
        <begin position="94"/>
        <end position="112"/>
    </location>
</feature>
<feature type="region of interest" description="Interaction with the nucleoprotein" evidence="1">
    <location>
        <begin position="180"/>
        <end position="197"/>
    </location>
</feature>
<feature type="compositionally biased region" description="Polar residues" evidence="4">
    <location>
        <begin position="15"/>
        <end position="28"/>
    </location>
</feature>
<feature type="compositionally biased region" description="Basic and acidic residues" evidence="4">
    <location>
        <begin position="30"/>
        <end position="41"/>
    </location>
</feature>
<dbReference type="EMBL" id="AY729654">
    <property type="protein sequence ID" value="AAU43888.1"/>
    <property type="molecule type" value="Genomic_RNA"/>
</dbReference>
<dbReference type="RefSeq" id="YP_138525.1">
    <property type="nucleotide sequence ID" value="NC_006432.1"/>
</dbReference>
<dbReference type="SMR" id="Q5XX03"/>
<dbReference type="GeneID" id="3160773"/>
<dbReference type="KEGG" id="vg:3160773"/>
<dbReference type="Proteomes" id="UP000000277">
    <property type="component" value="Segment"/>
</dbReference>
<dbReference type="GO" id="GO:0030430">
    <property type="term" value="C:host cell cytoplasm"/>
    <property type="evidence" value="ECO:0007669"/>
    <property type="project" value="UniProtKB-SubCell"/>
</dbReference>
<dbReference type="GO" id="GO:0019013">
    <property type="term" value="C:viral nucleocapsid"/>
    <property type="evidence" value="ECO:0007669"/>
    <property type="project" value="UniProtKB-KW"/>
</dbReference>
<dbReference type="GO" id="GO:0003723">
    <property type="term" value="F:RNA binding"/>
    <property type="evidence" value="ECO:0007669"/>
    <property type="project" value="UniProtKB-KW"/>
</dbReference>
<dbReference type="GO" id="GO:0008270">
    <property type="term" value="F:zinc ion binding"/>
    <property type="evidence" value="ECO:0007669"/>
    <property type="project" value="UniProtKB-KW"/>
</dbReference>
<dbReference type="GO" id="GO:0052170">
    <property type="term" value="P:symbiont-mediated suppression of host innate immune response"/>
    <property type="evidence" value="ECO:0007669"/>
    <property type="project" value="UniProtKB-KW"/>
</dbReference>
<dbReference type="Gene3D" id="1.20.120.1160">
    <property type="match status" value="1"/>
</dbReference>
<dbReference type="InterPro" id="IPR014459">
    <property type="entry name" value="VP30_FiloV"/>
</dbReference>
<dbReference type="Pfam" id="PF11507">
    <property type="entry name" value="Transcript_VP30"/>
    <property type="match status" value="1"/>
</dbReference>
<dbReference type="PIRSF" id="PIRSF011356">
    <property type="entry name" value="VP30_FiloV"/>
    <property type="match status" value="1"/>
</dbReference>
<organism>
    <name type="scientific">Sudan ebolavirus (strain Human/Uganda/Gulu/2000)</name>
    <name type="common">SEBOV</name>
    <name type="synonym">Sudan Ebola virus</name>
    <dbReference type="NCBI Taxonomy" id="386033"/>
    <lineage>
        <taxon>Viruses</taxon>
        <taxon>Riboviria</taxon>
        <taxon>Orthornavirae</taxon>
        <taxon>Negarnaviricota</taxon>
        <taxon>Haploviricotina</taxon>
        <taxon>Monjiviricetes</taxon>
        <taxon>Mononegavirales</taxon>
        <taxon>Filoviridae</taxon>
        <taxon>Orthoebolavirus</taxon>
        <taxon>Orthoebolavirus sudanense</taxon>
        <taxon>Sudan ebolavirus</taxon>
    </lineage>
</organism>
<comment type="function">
    <text evidence="2 3">Multifunctional protein that acts as a viral transcriptional activator. Promotes read-through of an RNA hairpin in the NP open reading frame to enhance viral transcription. Mechanistically, nonphosphorylated VP30 hexamers form a ternary complex with the viral leader RNA. Clamps the RNA template and the complex VP35-polymerase L together, thereby increasing the polymerase affinity for the RNA template to increase transcription initiation despite the presence of RNA secondary structures. Also assists stop-start transcription at gene junctions to promote transcription of downstream genes. Interaction with NP plays a critical role in transcription initiation by recognizing the RNA stem loop (By similarity). Interaction with host RBBP6 interferes with NP-VP30 interaction and inhibits viral RNA synthesis. Also acts as a suppressor of RNA silencing by interacting with host DICER1 and TARBP2/TRBP (By similarity).</text>
</comment>
<comment type="subunit">
    <text evidence="2 3">Homohexamer; hexamerization is essential for RNA binding. Interacts with the nucleoprotein/NP; this interaction plays both essential and inhibitory roles in viral RNA synthesis. Interacts with VP35. Interacts with host STAU1 (By similarity). Interacts (via C-terminus) with host RBBP6 isoform 1 (By similarity). Interacts with host DICER1; this interaction prevents TARBP2/TRBP binding to DICER1 and thus allows the virus to counteract host RNA silencing (By similarity). Interacts with host TARBP2/TRBP; this interaction, which occurs only in the presence of siRNA, prevents TARBP2 binding to DICER1 and thus allows the virus to counteract host RNA silencing (By similarity).</text>
</comment>
<comment type="subcellular location">
    <subcellularLocation>
        <location evidence="2">Virion</location>
    </subcellularLocation>
    <subcellularLocation>
        <location evidence="2">Host cytoplasm</location>
    </subcellularLocation>
    <text evidence="2">Present in viral inclusion bodies due to its interaction with NP.</text>
</comment>
<comment type="PTM">
    <text evidence="2">Phosphorylated by host. Phosphorylation negatively regulates the transcription activation. Phosphorylation and dephosphorylation take place in viral inclusion bodies and are largely influenced by the presence of NP. Dephosphorylated by host PPP2R5C; this dephosphorylation enhances viral transcription and is mediated by NP.</text>
</comment>
<comment type="similarity">
    <text evidence="5">Belongs to the filoviridae transcriptional activator VP30 family.</text>
</comment>
<name>VP30_EBOSU</name>
<evidence type="ECO:0000250" key="1"/>
<evidence type="ECO:0000250" key="2">
    <source>
        <dbReference type="UniProtKB" id="Q05323"/>
    </source>
</evidence>
<evidence type="ECO:0000250" key="3">
    <source>
        <dbReference type="UniProtKB" id="Q77DJ5"/>
    </source>
</evidence>
<evidence type="ECO:0000256" key="4">
    <source>
        <dbReference type="SAM" id="MobiDB-lite"/>
    </source>
</evidence>
<evidence type="ECO:0000305" key="5"/>